<organism>
    <name type="scientific">Xanthomonas axonopodis pv. citri (strain 306)</name>
    <dbReference type="NCBI Taxonomy" id="190486"/>
    <lineage>
        <taxon>Bacteria</taxon>
        <taxon>Pseudomonadati</taxon>
        <taxon>Pseudomonadota</taxon>
        <taxon>Gammaproteobacteria</taxon>
        <taxon>Lysobacterales</taxon>
        <taxon>Lysobacteraceae</taxon>
        <taxon>Xanthomonas</taxon>
    </lineage>
</organism>
<gene>
    <name evidence="1" type="primary">eno</name>
    <name type="ordered locus">XAC1719</name>
</gene>
<accession>Q8PLS0</accession>
<reference key="1">
    <citation type="journal article" date="2002" name="Nature">
        <title>Comparison of the genomes of two Xanthomonas pathogens with differing host specificities.</title>
        <authorList>
            <person name="da Silva A.C.R."/>
            <person name="Ferro J.A."/>
            <person name="Reinach F.C."/>
            <person name="Farah C.S."/>
            <person name="Furlan L.R."/>
            <person name="Quaggio R.B."/>
            <person name="Monteiro-Vitorello C.B."/>
            <person name="Van Sluys M.A."/>
            <person name="Almeida N.F. Jr."/>
            <person name="Alves L.M.C."/>
            <person name="do Amaral A.M."/>
            <person name="Bertolini M.C."/>
            <person name="Camargo L.E.A."/>
            <person name="Camarotte G."/>
            <person name="Cannavan F."/>
            <person name="Cardozo J."/>
            <person name="Chambergo F."/>
            <person name="Ciapina L.P."/>
            <person name="Cicarelli R.M.B."/>
            <person name="Coutinho L.L."/>
            <person name="Cursino-Santos J.R."/>
            <person name="El-Dorry H."/>
            <person name="Faria J.B."/>
            <person name="Ferreira A.J.S."/>
            <person name="Ferreira R.C.C."/>
            <person name="Ferro M.I.T."/>
            <person name="Formighieri E.F."/>
            <person name="Franco M.C."/>
            <person name="Greggio C.C."/>
            <person name="Gruber A."/>
            <person name="Katsuyama A.M."/>
            <person name="Kishi L.T."/>
            <person name="Leite R.P."/>
            <person name="Lemos E.G.M."/>
            <person name="Lemos M.V.F."/>
            <person name="Locali E.C."/>
            <person name="Machado M.A."/>
            <person name="Madeira A.M.B.N."/>
            <person name="Martinez-Rossi N.M."/>
            <person name="Martins E.C."/>
            <person name="Meidanis J."/>
            <person name="Menck C.F.M."/>
            <person name="Miyaki C.Y."/>
            <person name="Moon D.H."/>
            <person name="Moreira L.M."/>
            <person name="Novo M.T.M."/>
            <person name="Okura V.K."/>
            <person name="Oliveira M.C."/>
            <person name="Oliveira V.R."/>
            <person name="Pereira H.A."/>
            <person name="Rossi A."/>
            <person name="Sena J.A.D."/>
            <person name="Silva C."/>
            <person name="de Souza R.F."/>
            <person name="Spinola L.A.F."/>
            <person name="Takita M.A."/>
            <person name="Tamura R.E."/>
            <person name="Teixeira E.C."/>
            <person name="Tezza R.I.D."/>
            <person name="Trindade dos Santos M."/>
            <person name="Truffi D."/>
            <person name="Tsai S.M."/>
            <person name="White F.F."/>
            <person name="Setubal J.C."/>
            <person name="Kitajima J.P."/>
        </authorList>
    </citation>
    <scope>NUCLEOTIDE SEQUENCE [LARGE SCALE GENOMIC DNA]</scope>
    <source>
        <strain>306</strain>
    </source>
</reference>
<sequence length="430" mass="45906">MTTIAKILAREILDSRGNPTLEAEVTLDDGSFGRAAVPSGASTGTKEAVELRDGDKTRYLGKGVRHAVDNVNGTIAETLKNFDAADQQGLDRRLIDLDGTENKGRLGANALLGVSLAAAHAVAASRKQPLWQYLSTITEADVALPVPMMNIINGGAHADNNVDFQEFMVLPVGCSSFSEALRAGTEIFHSLKSVLKGHGLSTAVGDEGGFAPDFRSNVEALDTILEAIGKAGYTAGEDILLGLDVASSEFYDNGKYNLVGENKRLTSEQFVDFLADWVAQYPIISIEDGLAEDDWAGWKLLTDRVGKKVQLVGDDLFVTNPKIFKQGIDSGTANAILIKVNQIGTLTETLEAIAMAHAANYASIVSHRSGETEDTTIADIAVATTATQIKTGSLCRSDRVAKYNQLLRIEQALGSGARYAGRDAFVSIKR</sequence>
<evidence type="ECO:0000255" key="1">
    <source>
        <dbReference type="HAMAP-Rule" id="MF_00318"/>
    </source>
</evidence>
<protein>
    <recommendedName>
        <fullName evidence="1">Enolase</fullName>
        <ecNumber evidence="1">4.2.1.11</ecNumber>
    </recommendedName>
    <alternativeName>
        <fullName evidence="1">2-phospho-D-glycerate hydro-lyase</fullName>
    </alternativeName>
    <alternativeName>
        <fullName evidence="1">2-phosphoglycerate dehydratase</fullName>
    </alternativeName>
</protein>
<dbReference type="EC" id="4.2.1.11" evidence="1"/>
<dbReference type="EMBL" id="AE008923">
    <property type="protein sequence ID" value="AAM36586.1"/>
    <property type="molecule type" value="Genomic_DNA"/>
</dbReference>
<dbReference type="RefSeq" id="WP_003481827.1">
    <property type="nucleotide sequence ID" value="NC_003919.1"/>
</dbReference>
<dbReference type="SMR" id="Q8PLS0"/>
<dbReference type="GeneID" id="66910869"/>
<dbReference type="KEGG" id="xac:XAC1719"/>
<dbReference type="eggNOG" id="COG0148">
    <property type="taxonomic scope" value="Bacteria"/>
</dbReference>
<dbReference type="HOGENOM" id="CLU_031223_2_1_6"/>
<dbReference type="UniPathway" id="UPA00109">
    <property type="reaction ID" value="UER00187"/>
</dbReference>
<dbReference type="Proteomes" id="UP000000576">
    <property type="component" value="Chromosome"/>
</dbReference>
<dbReference type="GO" id="GO:0009986">
    <property type="term" value="C:cell surface"/>
    <property type="evidence" value="ECO:0007669"/>
    <property type="project" value="UniProtKB-SubCell"/>
</dbReference>
<dbReference type="GO" id="GO:0005576">
    <property type="term" value="C:extracellular region"/>
    <property type="evidence" value="ECO:0007669"/>
    <property type="project" value="UniProtKB-SubCell"/>
</dbReference>
<dbReference type="GO" id="GO:0000015">
    <property type="term" value="C:phosphopyruvate hydratase complex"/>
    <property type="evidence" value="ECO:0007669"/>
    <property type="project" value="InterPro"/>
</dbReference>
<dbReference type="GO" id="GO:0000287">
    <property type="term" value="F:magnesium ion binding"/>
    <property type="evidence" value="ECO:0007669"/>
    <property type="project" value="UniProtKB-UniRule"/>
</dbReference>
<dbReference type="GO" id="GO:0004634">
    <property type="term" value="F:phosphopyruvate hydratase activity"/>
    <property type="evidence" value="ECO:0007669"/>
    <property type="project" value="UniProtKB-UniRule"/>
</dbReference>
<dbReference type="GO" id="GO:0006096">
    <property type="term" value="P:glycolytic process"/>
    <property type="evidence" value="ECO:0007669"/>
    <property type="project" value="UniProtKB-UniRule"/>
</dbReference>
<dbReference type="CDD" id="cd03313">
    <property type="entry name" value="enolase"/>
    <property type="match status" value="1"/>
</dbReference>
<dbReference type="FunFam" id="3.20.20.120:FF:000001">
    <property type="entry name" value="Enolase"/>
    <property type="match status" value="1"/>
</dbReference>
<dbReference type="FunFam" id="3.30.390.10:FF:000001">
    <property type="entry name" value="Enolase"/>
    <property type="match status" value="1"/>
</dbReference>
<dbReference type="Gene3D" id="3.20.20.120">
    <property type="entry name" value="Enolase-like C-terminal domain"/>
    <property type="match status" value="1"/>
</dbReference>
<dbReference type="Gene3D" id="3.30.390.10">
    <property type="entry name" value="Enolase-like, N-terminal domain"/>
    <property type="match status" value="1"/>
</dbReference>
<dbReference type="HAMAP" id="MF_00318">
    <property type="entry name" value="Enolase"/>
    <property type="match status" value="1"/>
</dbReference>
<dbReference type="InterPro" id="IPR000941">
    <property type="entry name" value="Enolase"/>
</dbReference>
<dbReference type="InterPro" id="IPR036849">
    <property type="entry name" value="Enolase-like_C_sf"/>
</dbReference>
<dbReference type="InterPro" id="IPR029017">
    <property type="entry name" value="Enolase-like_N"/>
</dbReference>
<dbReference type="InterPro" id="IPR020810">
    <property type="entry name" value="Enolase_C"/>
</dbReference>
<dbReference type="InterPro" id="IPR020809">
    <property type="entry name" value="Enolase_CS"/>
</dbReference>
<dbReference type="InterPro" id="IPR020811">
    <property type="entry name" value="Enolase_N"/>
</dbReference>
<dbReference type="NCBIfam" id="TIGR01060">
    <property type="entry name" value="eno"/>
    <property type="match status" value="1"/>
</dbReference>
<dbReference type="PANTHER" id="PTHR11902">
    <property type="entry name" value="ENOLASE"/>
    <property type="match status" value="1"/>
</dbReference>
<dbReference type="PANTHER" id="PTHR11902:SF1">
    <property type="entry name" value="ENOLASE"/>
    <property type="match status" value="1"/>
</dbReference>
<dbReference type="Pfam" id="PF00113">
    <property type="entry name" value="Enolase_C"/>
    <property type="match status" value="1"/>
</dbReference>
<dbReference type="Pfam" id="PF03952">
    <property type="entry name" value="Enolase_N"/>
    <property type="match status" value="1"/>
</dbReference>
<dbReference type="PIRSF" id="PIRSF001400">
    <property type="entry name" value="Enolase"/>
    <property type="match status" value="1"/>
</dbReference>
<dbReference type="PRINTS" id="PR00148">
    <property type="entry name" value="ENOLASE"/>
</dbReference>
<dbReference type="SFLD" id="SFLDS00001">
    <property type="entry name" value="Enolase"/>
    <property type="match status" value="1"/>
</dbReference>
<dbReference type="SFLD" id="SFLDF00002">
    <property type="entry name" value="enolase"/>
    <property type="match status" value="1"/>
</dbReference>
<dbReference type="SMART" id="SM01192">
    <property type="entry name" value="Enolase_C"/>
    <property type="match status" value="1"/>
</dbReference>
<dbReference type="SMART" id="SM01193">
    <property type="entry name" value="Enolase_N"/>
    <property type="match status" value="1"/>
</dbReference>
<dbReference type="SUPFAM" id="SSF51604">
    <property type="entry name" value="Enolase C-terminal domain-like"/>
    <property type="match status" value="1"/>
</dbReference>
<dbReference type="SUPFAM" id="SSF54826">
    <property type="entry name" value="Enolase N-terminal domain-like"/>
    <property type="match status" value="1"/>
</dbReference>
<dbReference type="PROSITE" id="PS00164">
    <property type="entry name" value="ENOLASE"/>
    <property type="match status" value="1"/>
</dbReference>
<proteinExistence type="inferred from homology"/>
<feature type="chain" id="PRO_0000134011" description="Enolase">
    <location>
        <begin position="1"/>
        <end position="430"/>
    </location>
</feature>
<feature type="active site" description="Proton donor" evidence="1">
    <location>
        <position position="207"/>
    </location>
</feature>
<feature type="active site" description="Proton acceptor" evidence="1">
    <location>
        <position position="339"/>
    </location>
</feature>
<feature type="binding site" evidence="1">
    <location>
        <position position="165"/>
    </location>
    <ligand>
        <name>(2R)-2-phosphoglycerate</name>
        <dbReference type="ChEBI" id="CHEBI:58289"/>
    </ligand>
</feature>
<feature type="binding site" evidence="1">
    <location>
        <position position="244"/>
    </location>
    <ligand>
        <name>Mg(2+)</name>
        <dbReference type="ChEBI" id="CHEBI:18420"/>
    </ligand>
</feature>
<feature type="binding site" evidence="1">
    <location>
        <position position="287"/>
    </location>
    <ligand>
        <name>Mg(2+)</name>
        <dbReference type="ChEBI" id="CHEBI:18420"/>
    </ligand>
</feature>
<feature type="binding site" evidence="1">
    <location>
        <position position="314"/>
    </location>
    <ligand>
        <name>Mg(2+)</name>
        <dbReference type="ChEBI" id="CHEBI:18420"/>
    </ligand>
</feature>
<feature type="binding site" evidence="1">
    <location>
        <position position="339"/>
    </location>
    <ligand>
        <name>(2R)-2-phosphoglycerate</name>
        <dbReference type="ChEBI" id="CHEBI:58289"/>
    </ligand>
</feature>
<feature type="binding site" evidence="1">
    <location>
        <position position="368"/>
    </location>
    <ligand>
        <name>(2R)-2-phosphoglycerate</name>
        <dbReference type="ChEBI" id="CHEBI:58289"/>
    </ligand>
</feature>
<feature type="binding site" evidence="1">
    <location>
        <position position="369"/>
    </location>
    <ligand>
        <name>(2R)-2-phosphoglycerate</name>
        <dbReference type="ChEBI" id="CHEBI:58289"/>
    </ligand>
</feature>
<feature type="binding site" evidence="1">
    <location>
        <position position="390"/>
    </location>
    <ligand>
        <name>(2R)-2-phosphoglycerate</name>
        <dbReference type="ChEBI" id="CHEBI:58289"/>
    </ligand>
</feature>
<keyword id="KW-0963">Cytoplasm</keyword>
<keyword id="KW-0324">Glycolysis</keyword>
<keyword id="KW-0456">Lyase</keyword>
<keyword id="KW-0460">Magnesium</keyword>
<keyword id="KW-0479">Metal-binding</keyword>
<keyword id="KW-0964">Secreted</keyword>
<comment type="function">
    <text evidence="1">Catalyzes the reversible conversion of 2-phosphoglycerate (2-PG) into phosphoenolpyruvate (PEP). It is essential for the degradation of carbohydrates via glycolysis.</text>
</comment>
<comment type="catalytic activity">
    <reaction evidence="1">
        <text>(2R)-2-phosphoglycerate = phosphoenolpyruvate + H2O</text>
        <dbReference type="Rhea" id="RHEA:10164"/>
        <dbReference type="ChEBI" id="CHEBI:15377"/>
        <dbReference type="ChEBI" id="CHEBI:58289"/>
        <dbReference type="ChEBI" id="CHEBI:58702"/>
        <dbReference type="EC" id="4.2.1.11"/>
    </reaction>
</comment>
<comment type="cofactor">
    <cofactor evidence="1">
        <name>Mg(2+)</name>
        <dbReference type="ChEBI" id="CHEBI:18420"/>
    </cofactor>
    <text evidence="1">Binds a second Mg(2+) ion via substrate during catalysis.</text>
</comment>
<comment type="pathway">
    <text evidence="1">Carbohydrate degradation; glycolysis; pyruvate from D-glyceraldehyde 3-phosphate: step 4/5.</text>
</comment>
<comment type="subunit">
    <text evidence="1">Component of the RNA degradosome, a multiprotein complex involved in RNA processing and mRNA degradation.</text>
</comment>
<comment type="subcellular location">
    <subcellularLocation>
        <location evidence="1">Cytoplasm</location>
    </subcellularLocation>
    <subcellularLocation>
        <location evidence="1">Secreted</location>
    </subcellularLocation>
    <subcellularLocation>
        <location evidence="1">Cell surface</location>
    </subcellularLocation>
    <text evidence="1">Fractions of enolase are present in both the cytoplasm and on the cell surface.</text>
</comment>
<comment type="similarity">
    <text evidence="1">Belongs to the enolase family.</text>
</comment>
<name>ENO_XANAC</name>